<organism>
    <name type="scientific">Oenothera biennis</name>
    <name type="common">German evening primrose</name>
    <name type="synonym">Onagra biennis</name>
    <dbReference type="NCBI Taxonomy" id="3942"/>
    <lineage>
        <taxon>Eukaryota</taxon>
        <taxon>Viridiplantae</taxon>
        <taxon>Streptophyta</taxon>
        <taxon>Embryophyta</taxon>
        <taxon>Tracheophyta</taxon>
        <taxon>Spermatophyta</taxon>
        <taxon>Magnoliopsida</taxon>
        <taxon>eudicotyledons</taxon>
        <taxon>Gunneridae</taxon>
        <taxon>Pentapetalae</taxon>
        <taxon>rosids</taxon>
        <taxon>malvids</taxon>
        <taxon>Myrtales</taxon>
        <taxon>Onagraceae</taxon>
        <taxon>Onagroideae</taxon>
        <taxon>Onagreae</taxon>
        <taxon>Oenothera</taxon>
    </lineage>
</organism>
<evidence type="ECO:0000255" key="1">
    <source>
        <dbReference type="HAMAP-Rule" id="MF_01317"/>
    </source>
</evidence>
<accession>B0Z4X5</accession>
<name>PSBL_OENBI</name>
<sequence length="38" mass="4498">MTQSNPNEQDVELNRTSLYWGLLLIFVLAVLFSNYFFN</sequence>
<proteinExistence type="inferred from homology"/>
<comment type="function">
    <text evidence="1">One of the components of the core complex of photosystem II (PSII). PSII is a light-driven water:plastoquinone oxidoreductase that uses light energy to abstract electrons from H(2)O, generating O(2) and a proton gradient subsequently used for ATP formation. It consists of a core antenna complex that captures photons, and an electron transfer chain that converts photonic excitation into a charge separation. This subunit is found at the monomer-monomer interface and is required for correct PSII assembly and/or dimerization.</text>
</comment>
<comment type="subunit">
    <text evidence="1">PSII is composed of 1 copy each of membrane proteins PsbA, PsbB, PsbC, PsbD, PsbE, PsbF, PsbH, PsbI, PsbJ, PsbK, PsbL, PsbM, PsbT, PsbX, PsbY, PsbZ, Psb30/Ycf12, at least 3 peripheral proteins of the oxygen-evolving complex and a large number of cofactors. It forms dimeric complexes.</text>
</comment>
<comment type="subcellular location">
    <subcellularLocation>
        <location evidence="1">Plastid</location>
        <location evidence="1">Chloroplast thylakoid membrane</location>
        <topology evidence="1">Single-pass membrane protein</topology>
    </subcellularLocation>
</comment>
<comment type="similarity">
    <text evidence="1">Belongs to the PsbL family.</text>
</comment>
<protein>
    <recommendedName>
        <fullName evidence="1">Photosystem II reaction center protein L</fullName>
        <shortName evidence="1">PSII-L</shortName>
    </recommendedName>
</protein>
<gene>
    <name evidence="1" type="primary">psbL</name>
</gene>
<geneLocation type="chloroplast"/>
<keyword id="KW-0150">Chloroplast</keyword>
<keyword id="KW-0472">Membrane</keyword>
<keyword id="KW-0602">Photosynthesis</keyword>
<keyword id="KW-0604">Photosystem II</keyword>
<keyword id="KW-0934">Plastid</keyword>
<keyword id="KW-0674">Reaction center</keyword>
<keyword id="KW-0793">Thylakoid</keyword>
<keyword id="KW-0812">Transmembrane</keyword>
<keyword id="KW-1133">Transmembrane helix</keyword>
<dbReference type="EMBL" id="EU262889">
    <property type="protein sequence ID" value="ABW98887.1"/>
    <property type="molecule type" value="Genomic_DNA"/>
</dbReference>
<dbReference type="RefSeq" id="YP_001687382.1">
    <property type="nucleotide sequence ID" value="NC_010361.1"/>
</dbReference>
<dbReference type="SMR" id="B0Z4X5"/>
<dbReference type="GeneID" id="5952088"/>
<dbReference type="GO" id="GO:0009535">
    <property type="term" value="C:chloroplast thylakoid membrane"/>
    <property type="evidence" value="ECO:0007669"/>
    <property type="project" value="UniProtKB-SubCell"/>
</dbReference>
<dbReference type="GO" id="GO:0009539">
    <property type="term" value="C:photosystem II reaction center"/>
    <property type="evidence" value="ECO:0007669"/>
    <property type="project" value="InterPro"/>
</dbReference>
<dbReference type="GO" id="GO:0015979">
    <property type="term" value="P:photosynthesis"/>
    <property type="evidence" value="ECO:0007669"/>
    <property type="project" value="UniProtKB-UniRule"/>
</dbReference>
<dbReference type="HAMAP" id="MF_01317">
    <property type="entry name" value="PSII_PsbL"/>
    <property type="match status" value="1"/>
</dbReference>
<dbReference type="InterPro" id="IPR003372">
    <property type="entry name" value="PSII_PsbL"/>
</dbReference>
<dbReference type="InterPro" id="IPR037266">
    <property type="entry name" value="PSII_PsbL_sf"/>
</dbReference>
<dbReference type="NCBIfam" id="NF001972">
    <property type="entry name" value="PRK00753.1"/>
    <property type="match status" value="1"/>
</dbReference>
<dbReference type="Pfam" id="PF02419">
    <property type="entry name" value="PsbL"/>
    <property type="match status" value="1"/>
</dbReference>
<dbReference type="SUPFAM" id="SSF161017">
    <property type="entry name" value="Photosystem II reaction center protein L, PsbL"/>
    <property type="match status" value="1"/>
</dbReference>
<feature type="chain" id="PRO_0000353265" description="Photosystem II reaction center protein L">
    <location>
        <begin position="1"/>
        <end position="38"/>
    </location>
</feature>
<feature type="transmembrane region" description="Helical" evidence="1">
    <location>
        <begin position="17"/>
        <end position="37"/>
    </location>
</feature>
<reference key="1">
    <citation type="journal article" date="2008" name="Nucleic Acids Res.">
        <title>The complete nucleotide sequences of the five genetically distinct plastid genomes of Oenothera, subsection Oenothera: I. Sequence evaluation and plastome evolution.</title>
        <authorList>
            <person name="Greiner S."/>
            <person name="Wang X."/>
            <person name="Rauwolf U."/>
            <person name="Silber M.V."/>
            <person name="Mayer K."/>
            <person name="Meurer J."/>
            <person name="Haberer G."/>
            <person name="Herrmann R.G."/>
        </authorList>
    </citation>
    <scope>NUCLEOTIDE SEQUENCE [LARGE SCALE GENOMIC DNA]</scope>
    <source>
        <strain>cv. Suaveolens Grado</strain>
    </source>
</reference>